<organism>
    <name type="scientific">Acanthamoeba polyphaga mimivirus</name>
    <name type="common">APMV</name>
    <dbReference type="NCBI Taxonomy" id="212035"/>
    <lineage>
        <taxon>Viruses</taxon>
        <taxon>Varidnaviria</taxon>
        <taxon>Bamfordvirae</taxon>
        <taxon>Nucleocytoviricota</taxon>
        <taxon>Megaviricetes</taxon>
        <taxon>Imitervirales</taxon>
        <taxon>Mimiviridae</taxon>
        <taxon>Megamimivirinae</taxon>
        <taxon>Mimivirus</taxon>
        <taxon>Mimivirus bradfordmassiliense</taxon>
    </lineage>
</organism>
<evidence type="ECO:0000256" key="1">
    <source>
        <dbReference type="SAM" id="MobiDB-lite"/>
    </source>
</evidence>
<keyword id="KW-1185">Reference proteome</keyword>
<organismHost>
    <name type="scientific">Acanthamoeba polyphaga</name>
    <name type="common">Amoeba</name>
    <dbReference type="NCBI Taxonomy" id="5757"/>
</organismHost>
<sequence length="320" mass="36644">MTSTGLSTNKPIIKALNISNVVISNVVVANKLRNKKAPIHYNDGKLVFQTPYLTANSILVQTSTPNIYQFDTVFKGKSKKRCKELFDFIDTLESDIANKIIRNGMNWFTTSDISIKSLIRQNNDETFFIRWLLDLSSCVFIDDSKNQINPHESLDVKDLVRFIVEVKGAFVQDNKIGLAVIVHKIRVKKPEPKDKVVPEYDFDSESESDNSEEKRFVPVLETEKAPHSKNTRIIQTNQSREYDLDYNQPKNPKQTTLKNTLDTRSKNNSNTTKQIFEQDDIFSDDDNAEQLVAKISPRPERSNKSKHKIADNFGYGGFFE</sequence>
<dbReference type="EMBL" id="AY653733">
    <property type="protein sequence ID" value="AAV50770.1"/>
    <property type="molecule type" value="Genomic_DNA"/>
</dbReference>
<dbReference type="KEGG" id="vg:9925137"/>
<dbReference type="Proteomes" id="UP000001134">
    <property type="component" value="Genome"/>
</dbReference>
<proteinExistence type="predicted"/>
<feature type="chain" id="PRO_0000244047" description="Uncharacterized protein R506">
    <location>
        <begin position="1"/>
        <end position="320"/>
    </location>
</feature>
<feature type="region of interest" description="Disordered" evidence="1">
    <location>
        <begin position="196"/>
        <end position="273"/>
    </location>
</feature>
<feature type="compositionally biased region" description="Acidic residues" evidence="1">
    <location>
        <begin position="200"/>
        <end position="210"/>
    </location>
</feature>
<feature type="compositionally biased region" description="Basic and acidic residues" evidence="1">
    <location>
        <begin position="211"/>
        <end position="226"/>
    </location>
</feature>
<feature type="compositionally biased region" description="Polar residues" evidence="1">
    <location>
        <begin position="248"/>
        <end position="273"/>
    </location>
</feature>
<gene>
    <name type="ordered locus">MIMI_R506</name>
</gene>
<accession>Q5UQ67</accession>
<protein>
    <recommendedName>
        <fullName>Uncharacterized protein R506</fullName>
    </recommendedName>
</protein>
<reference key="1">
    <citation type="journal article" date="2004" name="Science">
        <title>The 1.2-megabase genome sequence of Mimivirus.</title>
        <authorList>
            <person name="Raoult D."/>
            <person name="Audic S."/>
            <person name="Robert C."/>
            <person name="Abergel C."/>
            <person name="Renesto P."/>
            <person name="Ogata H."/>
            <person name="La Scola B."/>
            <person name="Susan M."/>
            <person name="Claverie J.-M."/>
        </authorList>
    </citation>
    <scope>NUCLEOTIDE SEQUENCE [LARGE SCALE GENOMIC DNA]</scope>
    <source>
        <strain>Rowbotham-Bradford</strain>
    </source>
</reference>
<name>YR506_MIMIV</name>